<accession>A0K8E1</accession>
<evidence type="ECO:0000255" key="1">
    <source>
        <dbReference type="HAMAP-Rule" id="MF_01220"/>
    </source>
</evidence>
<comment type="function">
    <text evidence="1">Catalyzes the reversible phosphorylation of UMP to UDP.</text>
</comment>
<comment type="catalytic activity">
    <reaction evidence="1">
        <text>UMP + ATP = UDP + ADP</text>
        <dbReference type="Rhea" id="RHEA:24400"/>
        <dbReference type="ChEBI" id="CHEBI:30616"/>
        <dbReference type="ChEBI" id="CHEBI:57865"/>
        <dbReference type="ChEBI" id="CHEBI:58223"/>
        <dbReference type="ChEBI" id="CHEBI:456216"/>
        <dbReference type="EC" id="2.7.4.22"/>
    </reaction>
</comment>
<comment type="activity regulation">
    <text evidence="1">Inhibited by UTP.</text>
</comment>
<comment type="pathway">
    <text evidence="1">Pyrimidine metabolism; CTP biosynthesis via de novo pathway; UDP from UMP (UMPK route): step 1/1.</text>
</comment>
<comment type="subunit">
    <text evidence="1">Homohexamer.</text>
</comment>
<comment type="subcellular location">
    <subcellularLocation>
        <location evidence="1">Cytoplasm</location>
    </subcellularLocation>
</comment>
<comment type="similarity">
    <text evidence="1">Belongs to the UMP kinase family.</text>
</comment>
<dbReference type="EC" id="2.7.4.22" evidence="1"/>
<dbReference type="EMBL" id="CP000458">
    <property type="protein sequence ID" value="ABK08768.1"/>
    <property type="molecule type" value="Genomic_DNA"/>
</dbReference>
<dbReference type="RefSeq" id="WP_006402648.1">
    <property type="nucleotide sequence ID" value="NC_008542.1"/>
</dbReference>
<dbReference type="SMR" id="A0K8E1"/>
<dbReference type="GeneID" id="93167673"/>
<dbReference type="KEGG" id="bch:Bcen2424_2017"/>
<dbReference type="HOGENOM" id="CLU_033861_0_0_4"/>
<dbReference type="UniPathway" id="UPA00159">
    <property type="reaction ID" value="UER00275"/>
</dbReference>
<dbReference type="GO" id="GO:0005829">
    <property type="term" value="C:cytosol"/>
    <property type="evidence" value="ECO:0007669"/>
    <property type="project" value="TreeGrafter"/>
</dbReference>
<dbReference type="GO" id="GO:0005524">
    <property type="term" value="F:ATP binding"/>
    <property type="evidence" value="ECO:0007669"/>
    <property type="project" value="UniProtKB-KW"/>
</dbReference>
<dbReference type="GO" id="GO:0033862">
    <property type="term" value="F:UMP kinase activity"/>
    <property type="evidence" value="ECO:0007669"/>
    <property type="project" value="UniProtKB-EC"/>
</dbReference>
<dbReference type="GO" id="GO:0044210">
    <property type="term" value="P:'de novo' CTP biosynthetic process"/>
    <property type="evidence" value="ECO:0007669"/>
    <property type="project" value="UniProtKB-UniRule"/>
</dbReference>
<dbReference type="GO" id="GO:0006225">
    <property type="term" value="P:UDP biosynthetic process"/>
    <property type="evidence" value="ECO:0007669"/>
    <property type="project" value="TreeGrafter"/>
</dbReference>
<dbReference type="CDD" id="cd04254">
    <property type="entry name" value="AAK_UMPK-PyrH-Ec"/>
    <property type="match status" value="1"/>
</dbReference>
<dbReference type="FunFam" id="3.40.1160.10:FF:000001">
    <property type="entry name" value="Uridylate kinase"/>
    <property type="match status" value="1"/>
</dbReference>
<dbReference type="Gene3D" id="3.40.1160.10">
    <property type="entry name" value="Acetylglutamate kinase-like"/>
    <property type="match status" value="1"/>
</dbReference>
<dbReference type="HAMAP" id="MF_01220_B">
    <property type="entry name" value="PyrH_B"/>
    <property type="match status" value="1"/>
</dbReference>
<dbReference type="InterPro" id="IPR036393">
    <property type="entry name" value="AceGlu_kinase-like_sf"/>
</dbReference>
<dbReference type="InterPro" id="IPR001048">
    <property type="entry name" value="Asp/Glu/Uridylate_kinase"/>
</dbReference>
<dbReference type="InterPro" id="IPR011817">
    <property type="entry name" value="Uridylate_kinase"/>
</dbReference>
<dbReference type="InterPro" id="IPR015963">
    <property type="entry name" value="Uridylate_kinase_bac"/>
</dbReference>
<dbReference type="NCBIfam" id="TIGR02075">
    <property type="entry name" value="pyrH_bact"/>
    <property type="match status" value="1"/>
</dbReference>
<dbReference type="PANTHER" id="PTHR42833">
    <property type="entry name" value="URIDYLATE KINASE"/>
    <property type="match status" value="1"/>
</dbReference>
<dbReference type="PANTHER" id="PTHR42833:SF4">
    <property type="entry name" value="URIDYLATE KINASE PUMPKIN, CHLOROPLASTIC"/>
    <property type="match status" value="1"/>
</dbReference>
<dbReference type="Pfam" id="PF00696">
    <property type="entry name" value="AA_kinase"/>
    <property type="match status" value="1"/>
</dbReference>
<dbReference type="PIRSF" id="PIRSF005650">
    <property type="entry name" value="Uridylate_kin"/>
    <property type="match status" value="1"/>
</dbReference>
<dbReference type="SUPFAM" id="SSF53633">
    <property type="entry name" value="Carbamate kinase-like"/>
    <property type="match status" value="1"/>
</dbReference>
<reference key="1">
    <citation type="submission" date="2006-08" db="EMBL/GenBank/DDBJ databases">
        <title>Complete sequence of chromosome 1 of Burkholderia cenocepacia HI2424.</title>
        <authorList>
            <person name="Copeland A."/>
            <person name="Lucas S."/>
            <person name="Lapidus A."/>
            <person name="Barry K."/>
            <person name="Detter J.C."/>
            <person name="Glavina del Rio T."/>
            <person name="Hammon N."/>
            <person name="Israni S."/>
            <person name="Pitluck S."/>
            <person name="Chain P."/>
            <person name="Malfatti S."/>
            <person name="Shin M."/>
            <person name="Vergez L."/>
            <person name="Schmutz J."/>
            <person name="Larimer F."/>
            <person name="Land M."/>
            <person name="Hauser L."/>
            <person name="Kyrpides N."/>
            <person name="Kim E."/>
            <person name="LiPuma J.J."/>
            <person name="Gonzalez C.F."/>
            <person name="Konstantinidis K."/>
            <person name="Tiedje J.M."/>
            <person name="Richardson P."/>
        </authorList>
    </citation>
    <scope>NUCLEOTIDE SEQUENCE [LARGE SCALE GENOMIC DNA]</scope>
    <source>
        <strain>HI2424</strain>
    </source>
</reference>
<feature type="chain" id="PRO_0000323806" description="Uridylate kinase">
    <location>
        <begin position="1"/>
        <end position="237"/>
    </location>
</feature>
<feature type="binding site" evidence="1">
    <location>
        <begin position="11"/>
        <end position="14"/>
    </location>
    <ligand>
        <name>ATP</name>
        <dbReference type="ChEBI" id="CHEBI:30616"/>
    </ligand>
</feature>
<feature type="binding site" evidence="1">
    <location>
        <position position="53"/>
    </location>
    <ligand>
        <name>UMP</name>
        <dbReference type="ChEBI" id="CHEBI:57865"/>
    </ligand>
</feature>
<feature type="binding site" evidence="1">
    <location>
        <position position="54"/>
    </location>
    <ligand>
        <name>ATP</name>
        <dbReference type="ChEBI" id="CHEBI:30616"/>
    </ligand>
</feature>
<feature type="binding site" evidence="1">
    <location>
        <position position="58"/>
    </location>
    <ligand>
        <name>ATP</name>
        <dbReference type="ChEBI" id="CHEBI:30616"/>
    </ligand>
</feature>
<feature type="binding site" evidence="1">
    <location>
        <position position="73"/>
    </location>
    <ligand>
        <name>UMP</name>
        <dbReference type="ChEBI" id="CHEBI:57865"/>
    </ligand>
</feature>
<feature type="binding site" evidence="1">
    <location>
        <begin position="134"/>
        <end position="141"/>
    </location>
    <ligand>
        <name>UMP</name>
        <dbReference type="ChEBI" id="CHEBI:57865"/>
    </ligand>
</feature>
<feature type="binding site" evidence="1">
    <location>
        <position position="161"/>
    </location>
    <ligand>
        <name>ATP</name>
        <dbReference type="ChEBI" id="CHEBI:30616"/>
    </ligand>
</feature>
<feature type="binding site" evidence="1">
    <location>
        <position position="167"/>
    </location>
    <ligand>
        <name>ATP</name>
        <dbReference type="ChEBI" id="CHEBI:30616"/>
    </ligand>
</feature>
<feature type="binding site" evidence="1">
    <location>
        <position position="170"/>
    </location>
    <ligand>
        <name>ATP</name>
        <dbReference type="ChEBI" id="CHEBI:30616"/>
    </ligand>
</feature>
<sequence length="237" mass="25390">MSNAYKRVLLKLSGEALMGDDAFGINRATIERMVADIAEVVRLGTQLAVVIGGGNIFRGVAGGAAGMDRATADYMGMLATMMNALALQDAMRHAGIEARVQSALRMDQVVEPYIRPRAIRQLEEGRVVIFAAGTGNPFFTTDTAAALRGSEVGAEVVLKATKVDGVYSADPKKDPSATRYTTISFDEAISRNLQVMDATAFALCRDQKLPIRVFSINKPGALKRIVLGEDEGTLVHV</sequence>
<keyword id="KW-0067">ATP-binding</keyword>
<keyword id="KW-0963">Cytoplasm</keyword>
<keyword id="KW-0418">Kinase</keyword>
<keyword id="KW-0547">Nucleotide-binding</keyword>
<keyword id="KW-0665">Pyrimidine biosynthesis</keyword>
<keyword id="KW-0808">Transferase</keyword>
<gene>
    <name evidence="1" type="primary">pyrH</name>
    <name type="ordered locus">Bcen2424_2017</name>
</gene>
<name>PYRH_BURCH</name>
<protein>
    <recommendedName>
        <fullName evidence="1">Uridylate kinase</fullName>
        <shortName evidence="1">UK</shortName>
        <ecNumber evidence="1">2.7.4.22</ecNumber>
    </recommendedName>
    <alternativeName>
        <fullName evidence="1">Uridine monophosphate kinase</fullName>
        <shortName evidence="1">UMP kinase</shortName>
        <shortName evidence="1">UMPK</shortName>
    </alternativeName>
</protein>
<proteinExistence type="inferred from homology"/>
<organism>
    <name type="scientific">Burkholderia cenocepacia (strain HI2424)</name>
    <dbReference type="NCBI Taxonomy" id="331272"/>
    <lineage>
        <taxon>Bacteria</taxon>
        <taxon>Pseudomonadati</taxon>
        <taxon>Pseudomonadota</taxon>
        <taxon>Betaproteobacteria</taxon>
        <taxon>Burkholderiales</taxon>
        <taxon>Burkholderiaceae</taxon>
        <taxon>Burkholderia</taxon>
        <taxon>Burkholderia cepacia complex</taxon>
    </lineage>
</organism>